<reference key="1">
    <citation type="journal article" date="2005" name="Genome Biol.">
        <title>Full-length cDNAs from chicken bursal lymphocytes to facilitate gene function analysis.</title>
        <authorList>
            <person name="Caldwell R.B."/>
            <person name="Kierzek A.M."/>
            <person name="Arakawa H."/>
            <person name="Bezzubov Y."/>
            <person name="Zaim J."/>
            <person name="Fiedler P."/>
            <person name="Kutter S."/>
            <person name="Blagodatski A."/>
            <person name="Kostovska D."/>
            <person name="Koter M."/>
            <person name="Plachy J."/>
            <person name="Carninci P."/>
            <person name="Hayashizaki Y."/>
            <person name="Buerstedde J.-M."/>
        </authorList>
    </citation>
    <scope>NUCLEOTIDE SEQUENCE [LARGE SCALE MRNA]</scope>
    <source>
        <strain>CB</strain>
        <tissue>Bursa of Fabricius</tissue>
    </source>
</reference>
<sequence length="362" mass="40962">MESPAVTFTLAYLVFAVCFVFPPDEVRSAGLTVQSLLAAWLGSEDAAFVQYHLRRSTGTLLAHSLLPLGYYFGMCFAAPEKHLCFFYLASKEWKTFFFFAVLLPAVSSTMAYYWSRKGWNNHPLARTLAVYALPQSGWRAVASSINTEFRRIDKFATGAPGARVIVTDTWVIKVTTYCLHVAQQQDIHLTVTDSRQHELTPDSNMPVQFLTIRVASVNPYVKAFDIRLNSAEYGELREKLRAPISNAANVVIHQSLSDLFLETFTSLVEMNQTYSVPSTQELEPCIGCMQTIANIKLIKNCQEPNEGECQQCYCRPMWCLTCMGKWFASRQDQQHPETWLSSHVPCPTCRAKFCILDVCIIR</sequence>
<protein>
    <recommendedName>
        <fullName>Transmembrane protein 129</fullName>
    </recommendedName>
</protein>
<keyword id="KW-0472">Membrane</keyword>
<keyword id="KW-1185">Reference proteome</keyword>
<keyword id="KW-0732">Signal</keyword>
<keyword id="KW-0812">Transmembrane</keyword>
<keyword id="KW-1133">Transmembrane helix</keyword>
<comment type="subcellular location">
    <subcellularLocation>
        <location evidence="2">Membrane</location>
        <topology evidence="2">Multi-pass membrane protein</topology>
    </subcellularLocation>
</comment>
<comment type="similarity">
    <text evidence="2">Belongs to the TMEM129 family.</text>
</comment>
<name>TM129_CHICK</name>
<feature type="signal peptide" evidence="1">
    <location>
        <begin position="1"/>
        <end position="28"/>
    </location>
</feature>
<feature type="chain" id="PRO_0000291043" description="Transmembrane protein 129">
    <location>
        <begin position="29"/>
        <end position="362"/>
    </location>
</feature>
<feature type="topological domain" description="Extracellular" evidence="1">
    <location>
        <begin position="29"/>
        <end position="57"/>
    </location>
</feature>
<feature type="transmembrane region" description="Helical" evidence="1">
    <location>
        <begin position="58"/>
        <end position="78"/>
    </location>
</feature>
<feature type="topological domain" description="Cytoplasmic" evidence="1">
    <location>
        <begin position="79"/>
        <end position="94"/>
    </location>
</feature>
<feature type="transmembrane region" description="Helical" evidence="1">
    <location>
        <begin position="95"/>
        <end position="115"/>
    </location>
</feature>
<feature type="topological domain" description="Extracellular" evidence="1">
    <location>
        <begin position="116"/>
        <end position="362"/>
    </location>
</feature>
<organism>
    <name type="scientific">Gallus gallus</name>
    <name type="common">Chicken</name>
    <dbReference type="NCBI Taxonomy" id="9031"/>
    <lineage>
        <taxon>Eukaryota</taxon>
        <taxon>Metazoa</taxon>
        <taxon>Chordata</taxon>
        <taxon>Craniata</taxon>
        <taxon>Vertebrata</taxon>
        <taxon>Euteleostomi</taxon>
        <taxon>Archelosauria</taxon>
        <taxon>Archosauria</taxon>
        <taxon>Dinosauria</taxon>
        <taxon>Saurischia</taxon>
        <taxon>Theropoda</taxon>
        <taxon>Coelurosauria</taxon>
        <taxon>Aves</taxon>
        <taxon>Neognathae</taxon>
        <taxon>Galloanserae</taxon>
        <taxon>Galliformes</taxon>
        <taxon>Phasianidae</taxon>
        <taxon>Phasianinae</taxon>
        <taxon>Gallus</taxon>
    </lineage>
</organism>
<dbReference type="EMBL" id="AJ720959">
    <property type="protein sequence ID" value="CAG32618.1"/>
    <property type="molecule type" value="mRNA"/>
</dbReference>
<dbReference type="RefSeq" id="NP_001026339.1">
    <property type="nucleotide sequence ID" value="NM_001031168.1"/>
</dbReference>
<dbReference type="FunCoup" id="Q5ZI25">
    <property type="interactions" value="1580"/>
</dbReference>
<dbReference type="STRING" id="9031.ENSGALP00000025289"/>
<dbReference type="PaxDb" id="9031-ENSGALP00000025289"/>
<dbReference type="GeneID" id="422900"/>
<dbReference type="KEGG" id="gga:422900"/>
<dbReference type="CTD" id="92305"/>
<dbReference type="VEuPathDB" id="HostDB:geneid_422900"/>
<dbReference type="eggNOG" id="KOG3899">
    <property type="taxonomic scope" value="Eukaryota"/>
</dbReference>
<dbReference type="InParanoid" id="Q5ZI25"/>
<dbReference type="OrthoDB" id="10055027at2759"/>
<dbReference type="PhylomeDB" id="Q5ZI25"/>
<dbReference type="PRO" id="PR:Q5ZI25"/>
<dbReference type="Proteomes" id="UP000000539">
    <property type="component" value="Unassembled WGS sequence"/>
</dbReference>
<dbReference type="GO" id="GO:0005783">
    <property type="term" value="C:endoplasmic reticulum"/>
    <property type="evidence" value="ECO:0000318"/>
    <property type="project" value="GO_Central"/>
</dbReference>
<dbReference type="GO" id="GO:0016020">
    <property type="term" value="C:membrane"/>
    <property type="evidence" value="ECO:0007669"/>
    <property type="project" value="UniProtKB-SubCell"/>
</dbReference>
<dbReference type="GO" id="GO:0061630">
    <property type="term" value="F:ubiquitin protein ligase activity"/>
    <property type="evidence" value="ECO:0000318"/>
    <property type="project" value="GO_Central"/>
</dbReference>
<dbReference type="GO" id="GO:0016567">
    <property type="term" value="P:protein ubiquitination"/>
    <property type="evidence" value="ECO:0007669"/>
    <property type="project" value="InterPro"/>
</dbReference>
<dbReference type="InterPro" id="IPR018801">
    <property type="entry name" value="TM129"/>
</dbReference>
<dbReference type="PANTHER" id="PTHR31322">
    <property type="entry name" value="E3 UBIQUITIN-PROTEIN LIGASE TM129"/>
    <property type="match status" value="1"/>
</dbReference>
<dbReference type="PANTHER" id="PTHR31322:SF2">
    <property type="entry name" value="E3 UBIQUITIN-PROTEIN LIGASE TM129"/>
    <property type="match status" value="1"/>
</dbReference>
<dbReference type="Pfam" id="PF10272">
    <property type="entry name" value="Tmpp129"/>
    <property type="match status" value="1"/>
</dbReference>
<accession>Q5ZI25</accession>
<proteinExistence type="evidence at transcript level"/>
<gene>
    <name type="primary">TMEM129</name>
    <name type="ORF">RCJMB04_31c10</name>
</gene>
<evidence type="ECO:0000255" key="1"/>
<evidence type="ECO:0000305" key="2"/>